<accession>Q8REN3</accession>
<protein>
    <recommendedName>
        <fullName evidence="1">Exodeoxyribonuclease 7 large subunit</fullName>
        <ecNumber evidence="1">3.1.11.6</ecNumber>
    </recommendedName>
    <alternativeName>
        <fullName evidence="1">Exodeoxyribonuclease VII large subunit</fullName>
        <shortName evidence="1">Exonuclease VII large subunit</shortName>
    </alternativeName>
</protein>
<proteinExistence type="inferred from homology"/>
<gene>
    <name evidence="1" type="primary">xseA</name>
    <name type="ordered locus">FN1066</name>
</gene>
<dbReference type="EC" id="3.1.11.6" evidence="1"/>
<dbReference type="EMBL" id="AE009951">
    <property type="protein sequence ID" value="AAL95262.1"/>
    <property type="molecule type" value="Genomic_DNA"/>
</dbReference>
<dbReference type="RefSeq" id="NP_603963.1">
    <property type="nucleotide sequence ID" value="NC_003454.1"/>
</dbReference>
<dbReference type="RefSeq" id="WP_005902942.1">
    <property type="nucleotide sequence ID" value="NZ_OZ209243.1"/>
</dbReference>
<dbReference type="SMR" id="Q8REN3"/>
<dbReference type="FunCoup" id="Q8REN3">
    <property type="interactions" value="307"/>
</dbReference>
<dbReference type="STRING" id="190304.FN1066"/>
<dbReference type="PaxDb" id="190304-FN1066"/>
<dbReference type="EnsemblBacteria" id="AAL95262">
    <property type="protein sequence ID" value="AAL95262"/>
    <property type="gene ID" value="FN1066"/>
</dbReference>
<dbReference type="GeneID" id="79784047"/>
<dbReference type="KEGG" id="fnu:FN1066"/>
<dbReference type="PATRIC" id="fig|190304.8.peg.1631"/>
<dbReference type="eggNOG" id="COG1570">
    <property type="taxonomic scope" value="Bacteria"/>
</dbReference>
<dbReference type="HOGENOM" id="CLU_023625_2_0_0"/>
<dbReference type="InParanoid" id="Q8REN3"/>
<dbReference type="BioCyc" id="FNUC190304:G1FZS-1647-MONOMER"/>
<dbReference type="Proteomes" id="UP000002521">
    <property type="component" value="Chromosome"/>
</dbReference>
<dbReference type="GO" id="GO:0005737">
    <property type="term" value="C:cytoplasm"/>
    <property type="evidence" value="ECO:0007669"/>
    <property type="project" value="UniProtKB-SubCell"/>
</dbReference>
<dbReference type="GO" id="GO:0009318">
    <property type="term" value="C:exodeoxyribonuclease VII complex"/>
    <property type="evidence" value="ECO:0007669"/>
    <property type="project" value="InterPro"/>
</dbReference>
<dbReference type="GO" id="GO:0008855">
    <property type="term" value="F:exodeoxyribonuclease VII activity"/>
    <property type="evidence" value="ECO:0007669"/>
    <property type="project" value="UniProtKB-UniRule"/>
</dbReference>
<dbReference type="GO" id="GO:0003676">
    <property type="term" value="F:nucleic acid binding"/>
    <property type="evidence" value="ECO:0007669"/>
    <property type="project" value="InterPro"/>
</dbReference>
<dbReference type="GO" id="GO:0006308">
    <property type="term" value="P:DNA catabolic process"/>
    <property type="evidence" value="ECO:0007669"/>
    <property type="project" value="UniProtKB-UniRule"/>
</dbReference>
<dbReference type="CDD" id="cd04489">
    <property type="entry name" value="ExoVII_LU_OBF"/>
    <property type="match status" value="1"/>
</dbReference>
<dbReference type="Gene3D" id="2.40.50.1010">
    <property type="match status" value="1"/>
</dbReference>
<dbReference type="HAMAP" id="MF_00378">
    <property type="entry name" value="Exonuc_7_L"/>
    <property type="match status" value="1"/>
</dbReference>
<dbReference type="InterPro" id="IPR003753">
    <property type="entry name" value="Exonuc_VII_L"/>
</dbReference>
<dbReference type="InterPro" id="IPR020579">
    <property type="entry name" value="Exonuc_VII_lsu_C"/>
</dbReference>
<dbReference type="InterPro" id="IPR025824">
    <property type="entry name" value="OB-fold_nuc-bd_dom"/>
</dbReference>
<dbReference type="NCBIfam" id="TIGR00237">
    <property type="entry name" value="xseA"/>
    <property type="match status" value="1"/>
</dbReference>
<dbReference type="PANTHER" id="PTHR30008">
    <property type="entry name" value="EXODEOXYRIBONUCLEASE 7 LARGE SUBUNIT"/>
    <property type="match status" value="1"/>
</dbReference>
<dbReference type="PANTHER" id="PTHR30008:SF0">
    <property type="entry name" value="EXODEOXYRIBONUCLEASE 7 LARGE SUBUNIT"/>
    <property type="match status" value="1"/>
</dbReference>
<dbReference type="Pfam" id="PF02601">
    <property type="entry name" value="Exonuc_VII_L"/>
    <property type="match status" value="1"/>
</dbReference>
<dbReference type="Pfam" id="PF13742">
    <property type="entry name" value="tRNA_anti_2"/>
    <property type="match status" value="1"/>
</dbReference>
<comment type="function">
    <text evidence="1">Bidirectionally degrades single-stranded DNA into large acid-insoluble oligonucleotides, which are then degraded further into small acid-soluble oligonucleotides.</text>
</comment>
<comment type="catalytic activity">
    <reaction evidence="1">
        <text>Exonucleolytic cleavage in either 5'- to 3'- or 3'- to 5'-direction to yield nucleoside 5'-phosphates.</text>
        <dbReference type="EC" id="3.1.11.6"/>
    </reaction>
</comment>
<comment type="subunit">
    <text evidence="1">Heterooligomer composed of large and small subunits.</text>
</comment>
<comment type="subcellular location">
    <subcellularLocation>
        <location evidence="1">Cytoplasm</location>
    </subcellularLocation>
</comment>
<comment type="similarity">
    <text evidence="1">Belongs to the XseA family.</text>
</comment>
<reference key="1">
    <citation type="journal article" date="2002" name="J. Bacteriol.">
        <title>Genome sequence and analysis of the oral bacterium Fusobacterium nucleatum strain ATCC 25586.</title>
        <authorList>
            <person name="Kapatral V."/>
            <person name="Anderson I."/>
            <person name="Ivanova N."/>
            <person name="Reznik G."/>
            <person name="Los T."/>
            <person name="Lykidis A."/>
            <person name="Bhattacharyya A."/>
            <person name="Bartman A."/>
            <person name="Gardner W."/>
            <person name="Grechkin G."/>
            <person name="Zhu L."/>
            <person name="Vasieva O."/>
            <person name="Chu L."/>
            <person name="Kogan Y."/>
            <person name="Chaga O."/>
            <person name="Goltsman E."/>
            <person name="Bernal A."/>
            <person name="Larsen N."/>
            <person name="D'Souza M."/>
            <person name="Walunas T."/>
            <person name="Pusch G."/>
            <person name="Haselkorn R."/>
            <person name="Fonstein M."/>
            <person name="Kyrpides N.C."/>
            <person name="Overbeek R."/>
        </authorList>
    </citation>
    <scope>NUCLEOTIDE SEQUENCE [LARGE SCALE GENOMIC DNA]</scope>
    <source>
        <strain>ATCC 25586 / DSM 15643 / BCRC 10681 / CIP 101130 / JCM 8532 / KCTC 2640 / LMG 13131 / VPI 4355</strain>
    </source>
</reference>
<name>EX7L_FUSNN</name>
<organism>
    <name type="scientific">Fusobacterium nucleatum subsp. nucleatum (strain ATCC 25586 / DSM 15643 / BCRC 10681 / CIP 101130 / JCM 8532 / KCTC 2640 / LMG 13131 / VPI 4355)</name>
    <dbReference type="NCBI Taxonomy" id="190304"/>
    <lineage>
        <taxon>Bacteria</taxon>
        <taxon>Fusobacteriati</taxon>
        <taxon>Fusobacteriota</taxon>
        <taxon>Fusobacteriia</taxon>
        <taxon>Fusobacteriales</taxon>
        <taxon>Fusobacteriaceae</taxon>
        <taxon>Fusobacterium</taxon>
    </lineage>
</organism>
<sequence>MEKIYSVSEFNRMVKSYIDDIDDFQEFFIEGEISNITYYKSGHLYFSIKDSKSQIKCVAFNYKLKRIPEDLKEGDLVKLFGDVGFYEARGDFQVLARYIEKQNALGSLYAKLEKVKEKLTGLGYFNEEHKKDLPKFPKNIGVVTALTGAALQDIIKTTRKRFNSINIYIYPAKVQGIGAEQEIIKGIETLNKIKEIDFIIAGRGGGSIEDLWAFNEEEVAMAFFNSKKPIISAVGHEIDFLLSDLTADKRAATPTQAIELSVPEKESLLEDLKAREIYITKLLKSYVDSMKRELLLRIENYYLKNFPNTVNSLRESIVEKEIQLKEAMESFIEQKRNIFENKIDKISVLNPINTLKRGYTVSQVKNKRIDVLDDIEINDEMMTILKDGKVISVVKEKIYEKNIN</sequence>
<evidence type="ECO:0000255" key="1">
    <source>
        <dbReference type="HAMAP-Rule" id="MF_00378"/>
    </source>
</evidence>
<feature type="chain" id="PRO_0000197848" description="Exodeoxyribonuclease 7 large subunit">
    <location>
        <begin position="1"/>
        <end position="404"/>
    </location>
</feature>
<keyword id="KW-0963">Cytoplasm</keyword>
<keyword id="KW-0269">Exonuclease</keyword>
<keyword id="KW-0378">Hydrolase</keyword>
<keyword id="KW-0540">Nuclease</keyword>
<keyword id="KW-1185">Reference proteome</keyword>